<feature type="chain" id="PRO_0000083967" description="Protein HGV2">
    <location>
        <begin position="1"/>
        <end position="510"/>
    </location>
</feature>
<feature type="repeat" description="TPR 1">
    <location>
        <begin position="260"/>
        <end position="293"/>
    </location>
</feature>
<feature type="repeat" description="TPR 2">
    <location>
        <begin position="302"/>
        <end position="335"/>
    </location>
</feature>
<feature type="region of interest" description="Disordered" evidence="2">
    <location>
        <begin position="95"/>
        <end position="227"/>
    </location>
</feature>
<feature type="region of interest" description="Disordered" evidence="2">
    <location>
        <begin position="391"/>
        <end position="510"/>
    </location>
</feature>
<feature type="short sequence motif" description="Nuclear localization signal" evidence="1">
    <location>
        <begin position="444"/>
        <end position="451"/>
    </location>
</feature>
<feature type="short sequence motif" description="Nuclear localization signal" evidence="1">
    <location>
        <begin position="465"/>
        <end position="471"/>
    </location>
</feature>
<feature type="compositionally biased region" description="Acidic residues" evidence="2">
    <location>
        <begin position="98"/>
        <end position="110"/>
    </location>
</feature>
<feature type="compositionally biased region" description="Basic and acidic residues" evidence="2">
    <location>
        <begin position="111"/>
        <end position="129"/>
    </location>
</feature>
<feature type="compositionally biased region" description="Basic and acidic residues" evidence="2">
    <location>
        <begin position="142"/>
        <end position="199"/>
    </location>
</feature>
<feature type="compositionally biased region" description="Low complexity" evidence="2">
    <location>
        <begin position="204"/>
        <end position="217"/>
    </location>
</feature>
<feature type="compositionally biased region" description="Low complexity" evidence="2">
    <location>
        <begin position="398"/>
        <end position="411"/>
    </location>
</feature>
<feature type="compositionally biased region" description="Basic and acidic residues" evidence="2">
    <location>
        <begin position="459"/>
        <end position="471"/>
    </location>
</feature>
<reference key="1">
    <citation type="journal article" date="1993" name="J. Biochem.">
        <title>A complementary DNA for an ascidian embryonic nuclear antigen Hgv2 encodes a protein closely related to the amphibian histone-binding protein N1.</title>
        <authorList>
            <person name="Fujiwara S."/>
            <person name="Kawahara H."/>
            <person name="Makabe K.W."/>
            <person name="Satoh N."/>
        </authorList>
    </citation>
    <scope>NUCLEOTIDE SEQUENCE [MRNA]</scope>
    <source>
        <tissue>Oocyte</tissue>
    </source>
</reference>
<proteinExistence type="evidence at transcript level"/>
<evidence type="ECO:0000255" key="1"/>
<evidence type="ECO:0000256" key="2">
    <source>
        <dbReference type="SAM" id="MobiDB-lite"/>
    </source>
</evidence>
<evidence type="ECO:0000305" key="3"/>
<dbReference type="EMBL" id="D13541">
    <property type="protein sequence ID" value="BAA02741.1"/>
    <property type="molecule type" value="mRNA"/>
</dbReference>
<dbReference type="PIR" id="JX0254">
    <property type="entry name" value="JX0254"/>
</dbReference>
<dbReference type="SMR" id="Q02508"/>
<dbReference type="GO" id="GO:0005654">
    <property type="term" value="C:nucleoplasm"/>
    <property type="evidence" value="ECO:0007669"/>
    <property type="project" value="TreeGrafter"/>
</dbReference>
<dbReference type="GO" id="GO:0042393">
    <property type="term" value="F:histone binding"/>
    <property type="evidence" value="ECO:0007669"/>
    <property type="project" value="TreeGrafter"/>
</dbReference>
<dbReference type="GO" id="GO:0034080">
    <property type="term" value="P:CENP-A containing chromatin assembly"/>
    <property type="evidence" value="ECO:0007669"/>
    <property type="project" value="TreeGrafter"/>
</dbReference>
<dbReference type="GO" id="GO:0006335">
    <property type="term" value="P:DNA replication-dependent chromatin assembly"/>
    <property type="evidence" value="ECO:0007669"/>
    <property type="project" value="TreeGrafter"/>
</dbReference>
<dbReference type="Gene3D" id="1.25.40.10">
    <property type="entry name" value="Tetratricopeptide repeat domain"/>
    <property type="match status" value="1"/>
</dbReference>
<dbReference type="InterPro" id="IPR051730">
    <property type="entry name" value="NASP-like"/>
</dbReference>
<dbReference type="InterPro" id="IPR011990">
    <property type="entry name" value="TPR-like_helical_dom_sf"/>
</dbReference>
<dbReference type="InterPro" id="IPR019734">
    <property type="entry name" value="TPR_rpt"/>
</dbReference>
<dbReference type="PANTHER" id="PTHR15081:SF1">
    <property type="entry name" value="NUCLEAR AUTOANTIGENIC SPERM PROTEIN"/>
    <property type="match status" value="1"/>
</dbReference>
<dbReference type="PANTHER" id="PTHR15081">
    <property type="entry name" value="NUCLEAR AUTOANTIGENIC SPERM PROTEIN NASP -RELATED"/>
    <property type="match status" value="1"/>
</dbReference>
<dbReference type="Pfam" id="PF13424">
    <property type="entry name" value="TPR_12"/>
    <property type="match status" value="1"/>
</dbReference>
<dbReference type="SMART" id="SM00028">
    <property type="entry name" value="TPR"/>
    <property type="match status" value="3"/>
</dbReference>
<dbReference type="SUPFAM" id="SSF48452">
    <property type="entry name" value="TPR-like"/>
    <property type="match status" value="1"/>
</dbReference>
<dbReference type="PROSITE" id="PS50005">
    <property type="entry name" value="TPR"/>
    <property type="match status" value="2"/>
</dbReference>
<dbReference type="PROSITE" id="PS50293">
    <property type="entry name" value="TPR_REGION"/>
    <property type="match status" value="1"/>
</dbReference>
<sequence>MVQDTEVVEAGTSKETETTVDVEKEIQECMGAGKKDLLCNDYSEAVNCFQEACTLLSGKHGQMAEECCEAYYYYGVSLLELARLENGVLGNALKGVPEEDADGDSDQEQEQFEKPDLPETEREKLREEVEAAMATEDEDTQEERGCPRRVEKKKEDDKPKESEKSAEKSDEKEKEEKQAKVESSTVKDVKDEKSSDKPVESSNTEEPGTSGTSASSSKENESEEDPDDISNMQLAWEMLELAKVLYKKHDKSKTNKQMVAQCHLKLGELGLEVENHPQAIGDFLECLVIQKDLLPETDRKLAETYYNLGLAYSFEKRYDNALEHYQSALDVLEARVDMLNELIESNEGNKEKEKEIISECKEVGELKELIPDINSKIEDVILAKKQMQKLDGSPFRQASEGESSSGLGASTSDDKPCSTIPIRKVAPTSVPVAKDSPSDITHLVRRKRPSPDEDNQPAESKENESKKAKQEETEEATNGHSAVKKDTDVTDKNGTNGHSKTPKKDAAKRR</sequence>
<protein>
    <recommendedName>
        <fullName>Protein HGV2</fullName>
    </recommendedName>
</protein>
<organism>
    <name type="scientific">Halocynthia roretzi</name>
    <name type="common">Sea squirt</name>
    <name type="synonym">Cynthia roretzi</name>
    <dbReference type="NCBI Taxonomy" id="7729"/>
    <lineage>
        <taxon>Eukaryota</taxon>
        <taxon>Metazoa</taxon>
        <taxon>Chordata</taxon>
        <taxon>Tunicata</taxon>
        <taxon>Ascidiacea</taxon>
        <taxon>Stolidobranchia</taxon>
        <taxon>Pyuridae</taxon>
        <taxon>Halocynthia</taxon>
    </lineage>
</organism>
<accession>Q02508</accession>
<keyword id="KW-0217">Developmental protein</keyword>
<keyword id="KW-0539">Nucleus</keyword>
<keyword id="KW-0677">Repeat</keyword>
<keyword id="KW-0802">TPR repeat</keyword>
<name>HGV2_HALRO</name>
<gene>
    <name type="primary">HGV2</name>
</gene>
<comment type="function">
    <text>May function as a nucleosome assembly factor during rapid embryonic cell divisions.</text>
</comment>
<comment type="subcellular location">
    <subcellularLocation>
        <location>Nucleus</location>
    </subcellularLocation>
</comment>
<comment type="tissue specificity">
    <text>Embryo and larvae.</text>
</comment>
<comment type="developmental stage">
    <text>This protein is detected in the nuclei of all cells in embryos and larvae but is not detected in the cells of metamorphosed juveniles.</text>
</comment>
<comment type="similarity">
    <text evidence="3">Belongs to the NASP family.</text>
</comment>